<gene>
    <name evidence="1" type="primary">rplV</name>
    <name type="ordered locus">RT0646</name>
</gene>
<accession>Q68W83</accession>
<dbReference type="EMBL" id="AE017197">
    <property type="protein sequence ID" value="AAU04109.1"/>
    <property type="molecule type" value="Genomic_DNA"/>
</dbReference>
<dbReference type="RefSeq" id="WP_011191086.1">
    <property type="nucleotide sequence ID" value="NC_006142.1"/>
</dbReference>
<dbReference type="SMR" id="Q68W83"/>
<dbReference type="KEGG" id="rty:RT0646"/>
<dbReference type="eggNOG" id="COG0091">
    <property type="taxonomic scope" value="Bacteria"/>
</dbReference>
<dbReference type="HOGENOM" id="CLU_083987_3_0_5"/>
<dbReference type="OrthoDB" id="9805969at2"/>
<dbReference type="Proteomes" id="UP000000604">
    <property type="component" value="Chromosome"/>
</dbReference>
<dbReference type="GO" id="GO:0022625">
    <property type="term" value="C:cytosolic large ribosomal subunit"/>
    <property type="evidence" value="ECO:0007669"/>
    <property type="project" value="TreeGrafter"/>
</dbReference>
<dbReference type="GO" id="GO:0019843">
    <property type="term" value="F:rRNA binding"/>
    <property type="evidence" value="ECO:0007669"/>
    <property type="project" value="UniProtKB-UniRule"/>
</dbReference>
<dbReference type="GO" id="GO:0003735">
    <property type="term" value="F:structural constituent of ribosome"/>
    <property type="evidence" value="ECO:0007669"/>
    <property type="project" value="InterPro"/>
</dbReference>
<dbReference type="GO" id="GO:0006412">
    <property type="term" value="P:translation"/>
    <property type="evidence" value="ECO:0007669"/>
    <property type="project" value="UniProtKB-UniRule"/>
</dbReference>
<dbReference type="CDD" id="cd00336">
    <property type="entry name" value="Ribosomal_L22"/>
    <property type="match status" value="1"/>
</dbReference>
<dbReference type="Gene3D" id="3.90.470.10">
    <property type="entry name" value="Ribosomal protein L22/L17"/>
    <property type="match status" value="1"/>
</dbReference>
<dbReference type="HAMAP" id="MF_01331_B">
    <property type="entry name" value="Ribosomal_uL22_B"/>
    <property type="match status" value="1"/>
</dbReference>
<dbReference type="InterPro" id="IPR001063">
    <property type="entry name" value="Ribosomal_uL22"/>
</dbReference>
<dbReference type="InterPro" id="IPR005727">
    <property type="entry name" value="Ribosomal_uL22_bac/chlpt-type"/>
</dbReference>
<dbReference type="InterPro" id="IPR047867">
    <property type="entry name" value="Ribosomal_uL22_bac/org-type"/>
</dbReference>
<dbReference type="InterPro" id="IPR018260">
    <property type="entry name" value="Ribosomal_uL22_CS"/>
</dbReference>
<dbReference type="InterPro" id="IPR036394">
    <property type="entry name" value="Ribosomal_uL22_sf"/>
</dbReference>
<dbReference type="NCBIfam" id="TIGR01044">
    <property type="entry name" value="rplV_bact"/>
    <property type="match status" value="1"/>
</dbReference>
<dbReference type="PANTHER" id="PTHR13501">
    <property type="entry name" value="CHLOROPLAST 50S RIBOSOMAL PROTEIN L22-RELATED"/>
    <property type="match status" value="1"/>
</dbReference>
<dbReference type="PANTHER" id="PTHR13501:SF8">
    <property type="entry name" value="LARGE RIBOSOMAL SUBUNIT PROTEIN UL22M"/>
    <property type="match status" value="1"/>
</dbReference>
<dbReference type="Pfam" id="PF00237">
    <property type="entry name" value="Ribosomal_L22"/>
    <property type="match status" value="1"/>
</dbReference>
<dbReference type="SUPFAM" id="SSF54843">
    <property type="entry name" value="Ribosomal protein L22"/>
    <property type="match status" value="1"/>
</dbReference>
<dbReference type="PROSITE" id="PS00464">
    <property type="entry name" value="RIBOSOMAL_L22"/>
    <property type="match status" value="1"/>
</dbReference>
<feature type="chain" id="PRO_0000243200" description="Large ribosomal subunit protein uL22">
    <location>
        <begin position="1"/>
        <end position="119"/>
    </location>
</feature>
<keyword id="KW-0687">Ribonucleoprotein</keyword>
<keyword id="KW-0689">Ribosomal protein</keyword>
<keyword id="KW-0694">RNA-binding</keyword>
<keyword id="KW-0699">rRNA-binding</keyword>
<protein>
    <recommendedName>
        <fullName evidence="1">Large ribosomal subunit protein uL22</fullName>
    </recommendedName>
    <alternativeName>
        <fullName evidence="2">50S ribosomal protein L22</fullName>
    </alternativeName>
</protein>
<sequence>MIQENKNFATAKAKSIRVSPRKLNLVASFIRNMKVSEALIQLTFSPKRIAKIVKDCLRSAVANAENNLGLDIDRLIITKATVGKSVVMKRIMPRAKGRATRINKFFSNLDITVTEKEDN</sequence>
<organism>
    <name type="scientific">Rickettsia typhi (strain ATCC VR-144 / Wilmington)</name>
    <dbReference type="NCBI Taxonomy" id="257363"/>
    <lineage>
        <taxon>Bacteria</taxon>
        <taxon>Pseudomonadati</taxon>
        <taxon>Pseudomonadota</taxon>
        <taxon>Alphaproteobacteria</taxon>
        <taxon>Rickettsiales</taxon>
        <taxon>Rickettsiaceae</taxon>
        <taxon>Rickettsieae</taxon>
        <taxon>Rickettsia</taxon>
        <taxon>typhus group</taxon>
    </lineage>
</organism>
<name>RL22_RICTY</name>
<comment type="function">
    <text evidence="1">This protein binds specifically to 23S rRNA; its binding is stimulated by other ribosomal proteins, e.g. L4, L17, and L20. It is important during the early stages of 50S assembly. It makes multiple contacts with different domains of the 23S rRNA in the assembled 50S subunit and ribosome (By similarity).</text>
</comment>
<comment type="function">
    <text evidence="1">The globular domain of the protein is located near the polypeptide exit tunnel on the outside of the subunit, while an extended beta-hairpin is found that lines the wall of the exit tunnel in the center of the 70S ribosome.</text>
</comment>
<comment type="subunit">
    <text evidence="1">Part of the 50S ribosomal subunit.</text>
</comment>
<comment type="similarity">
    <text evidence="1">Belongs to the universal ribosomal protein uL22 family.</text>
</comment>
<evidence type="ECO:0000255" key="1">
    <source>
        <dbReference type="HAMAP-Rule" id="MF_01331"/>
    </source>
</evidence>
<evidence type="ECO:0000305" key="2"/>
<reference key="1">
    <citation type="journal article" date="2004" name="J. Bacteriol.">
        <title>Complete genome sequence of Rickettsia typhi and comparison with sequences of other Rickettsiae.</title>
        <authorList>
            <person name="McLeod M.P."/>
            <person name="Qin X."/>
            <person name="Karpathy S.E."/>
            <person name="Gioia J."/>
            <person name="Highlander S.K."/>
            <person name="Fox G.E."/>
            <person name="McNeill T.Z."/>
            <person name="Jiang H."/>
            <person name="Muzny D."/>
            <person name="Jacob L.S."/>
            <person name="Hawes A.C."/>
            <person name="Sodergren E."/>
            <person name="Gill R."/>
            <person name="Hume J."/>
            <person name="Morgan M."/>
            <person name="Fan G."/>
            <person name="Amin A.G."/>
            <person name="Gibbs R.A."/>
            <person name="Hong C."/>
            <person name="Yu X.-J."/>
            <person name="Walker D.H."/>
            <person name="Weinstock G.M."/>
        </authorList>
    </citation>
    <scope>NUCLEOTIDE SEQUENCE [LARGE SCALE GENOMIC DNA]</scope>
    <source>
        <strain>ATCC VR-144 / Wilmington</strain>
    </source>
</reference>
<proteinExistence type="inferred from homology"/>